<organism>
    <name type="scientific">Escherichia coli (strain K12)</name>
    <dbReference type="NCBI Taxonomy" id="83333"/>
    <lineage>
        <taxon>Bacteria</taxon>
        <taxon>Pseudomonadati</taxon>
        <taxon>Pseudomonadota</taxon>
        <taxon>Gammaproteobacteria</taxon>
        <taxon>Enterobacterales</taxon>
        <taxon>Enterobacteriaceae</taxon>
        <taxon>Escherichia</taxon>
    </lineage>
</organism>
<accession>P00864</accession>
<accession>Q2M8Q1</accession>
<name>CAPP_ECOLI</name>
<dbReference type="EC" id="4.1.1.31"/>
<dbReference type="EMBL" id="X05903">
    <property type="protein sequence ID" value="CAA29332.1"/>
    <property type="molecule type" value="Genomic_DNA"/>
</dbReference>
<dbReference type="EMBL" id="X55417">
    <property type="status" value="NOT_ANNOTATED_CDS"/>
    <property type="molecule type" value="Genomic_DNA"/>
</dbReference>
<dbReference type="EMBL" id="U00006">
    <property type="protein sequence ID" value="AAC43062.1"/>
    <property type="molecule type" value="Genomic_DNA"/>
</dbReference>
<dbReference type="EMBL" id="U00096">
    <property type="protein sequence ID" value="AAC76938.1"/>
    <property type="molecule type" value="Genomic_DNA"/>
</dbReference>
<dbReference type="EMBL" id="AP009048">
    <property type="protein sequence ID" value="BAE77355.1"/>
    <property type="molecule type" value="Genomic_DNA"/>
</dbReference>
<dbReference type="EMBL" id="X01700">
    <property type="protein sequence ID" value="CAA25847.1"/>
    <property type="molecule type" value="Genomic_DNA"/>
</dbReference>
<dbReference type="PIR" id="A01083">
    <property type="entry name" value="QYEC"/>
</dbReference>
<dbReference type="RefSeq" id="NP_418391.1">
    <property type="nucleotide sequence ID" value="NC_000913.3"/>
</dbReference>
<dbReference type="RefSeq" id="WP_001005586.1">
    <property type="nucleotide sequence ID" value="NZ_SSZK01000014.1"/>
</dbReference>
<dbReference type="PDB" id="1FIY">
    <property type="method" value="X-ray"/>
    <property type="resolution" value="2.80 A"/>
    <property type="chains" value="A=1-883"/>
</dbReference>
<dbReference type="PDB" id="1JQN">
    <property type="method" value="X-ray"/>
    <property type="resolution" value="2.35 A"/>
    <property type="chains" value="A=1-883"/>
</dbReference>
<dbReference type="PDB" id="1QB4">
    <property type="method" value="X-ray"/>
    <property type="resolution" value="2.60 A"/>
    <property type="chains" value="A=1-883"/>
</dbReference>
<dbReference type="PDBsum" id="1FIY"/>
<dbReference type="PDBsum" id="1JQN"/>
<dbReference type="PDBsum" id="1QB4"/>
<dbReference type="SMR" id="P00864"/>
<dbReference type="BioGRID" id="4262649">
    <property type="interactions" value="15"/>
</dbReference>
<dbReference type="DIP" id="DIP-10538N"/>
<dbReference type="FunCoup" id="P00864">
    <property type="interactions" value="500"/>
</dbReference>
<dbReference type="IntAct" id="P00864">
    <property type="interactions" value="3"/>
</dbReference>
<dbReference type="STRING" id="511145.b3956"/>
<dbReference type="DrugBank" id="DB04317">
    <property type="generic name" value="3,3-Dichloro-2-Phosphonomethyl-Acrylic Acid"/>
</dbReference>
<dbReference type="jPOST" id="P00864"/>
<dbReference type="PaxDb" id="511145-b3956"/>
<dbReference type="EnsemblBacteria" id="AAC76938">
    <property type="protein sequence ID" value="AAC76938"/>
    <property type="gene ID" value="b3956"/>
</dbReference>
<dbReference type="GeneID" id="948457"/>
<dbReference type="KEGG" id="ecj:JW3928"/>
<dbReference type="KEGG" id="eco:b3956"/>
<dbReference type="KEGG" id="ecoc:C3026_21375"/>
<dbReference type="PATRIC" id="fig|1411691.4.peg.2749"/>
<dbReference type="EchoBASE" id="EB0749"/>
<dbReference type="eggNOG" id="COG2352">
    <property type="taxonomic scope" value="Bacteria"/>
</dbReference>
<dbReference type="HOGENOM" id="CLU_006557_2_0_6"/>
<dbReference type="InParanoid" id="P00864"/>
<dbReference type="OMA" id="VFGWTQS"/>
<dbReference type="OrthoDB" id="9768133at2"/>
<dbReference type="PhylomeDB" id="P00864"/>
<dbReference type="BioCyc" id="EcoCyc:PEPCARBOX-MONOMER"/>
<dbReference type="BioCyc" id="MetaCyc:PEPCARBOX-MONOMER"/>
<dbReference type="BRENDA" id="4.1.1.31">
    <property type="organism ID" value="2026"/>
</dbReference>
<dbReference type="SABIO-RK" id="P00864"/>
<dbReference type="EvolutionaryTrace" id="P00864"/>
<dbReference type="PRO" id="PR:P00864"/>
<dbReference type="Proteomes" id="UP000000625">
    <property type="component" value="Chromosome"/>
</dbReference>
<dbReference type="GO" id="GO:0005829">
    <property type="term" value="C:cytosol"/>
    <property type="evidence" value="ECO:0000314"/>
    <property type="project" value="EcoCyc"/>
</dbReference>
<dbReference type="GO" id="GO:0042802">
    <property type="term" value="F:identical protein binding"/>
    <property type="evidence" value="ECO:0000314"/>
    <property type="project" value="EcoCyc"/>
</dbReference>
<dbReference type="GO" id="GO:0000287">
    <property type="term" value="F:magnesium ion binding"/>
    <property type="evidence" value="ECO:0007669"/>
    <property type="project" value="UniProtKB-UniRule"/>
</dbReference>
<dbReference type="GO" id="GO:0008964">
    <property type="term" value="F:phosphoenolpyruvate carboxylase activity"/>
    <property type="evidence" value="ECO:0000314"/>
    <property type="project" value="EcoCyc"/>
</dbReference>
<dbReference type="GO" id="GO:0015977">
    <property type="term" value="P:carbon fixation"/>
    <property type="evidence" value="ECO:0007669"/>
    <property type="project" value="UniProtKB-UniRule"/>
</dbReference>
<dbReference type="GO" id="GO:0006094">
    <property type="term" value="P:gluconeogenesis"/>
    <property type="evidence" value="ECO:0000315"/>
    <property type="project" value="EcoCyc"/>
</dbReference>
<dbReference type="GO" id="GO:0006107">
    <property type="term" value="P:oxaloacetate metabolic process"/>
    <property type="evidence" value="ECO:0000315"/>
    <property type="project" value="EcoCyc"/>
</dbReference>
<dbReference type="GO" id="GO:0051289">
    <property type="term" value="P:protein homotetramerization"/>
    <property type="evidence" value="ECO:0000314"/>
    <property type="project" value="EcoCyc"/>
</dbReference>
<dbReference type="GO" id="GO:0006099">
    <property type="term" value="P:tricarboxylic acid cycle"/>
    <property type="evidence" value="ECO:0007669"/>
    <property type="project" value="InterPro"/>
</dbReference>
<dbReference type="FunFam" id="1.20.1440.90:FF:000002">
    <property type="entry name" value="Phosphoenolpyruvate carboxylase"/>
    <property type="match status" value="1"/>
</dbReference>
<dbReference type="Gene3D" id="1.20.1440.90">
    <property type="entry name" value="Phosphoenolpyruvate/pyruvate domain"/>
    <property type="match status" value="1"/>
</dbReference>
<dbReference type="HAMAP" id="MF_00595">
    <property type="entry name" value="PEPcase_type1"/>
    <property type="match status" value="1"/>
</dbReference>
<dbReference type="InterPro" id="IPR021135">
    <property type="entry name" value="PEP_COase"/>
</dbReference>
<dbReference type="InterPro" id="IPR022805">
    <property type="entry name" value="PEP_COase_bac/pln-type"/>
</dbReference>
<dbReference type="InterPro" id="IPR018129">
    <property type="entry name" value="PEP_COase_Lys_AS"/>
</dbReference>
<dbReference type="InterPro" id="IPR033129">
    <property type="entry name" value="PEPCASE_His_AS"/>
</dbReference>
<dbReference type="InterPro" id="IPR015813">
    <property type="entry name" value="Pyrv/PenolPyrv_kinase-like_dom"/>
</dbReference>
<dbReference type="NCBIfam" id="NF000584">
    <property type="entry name" value="PRK00009.1"/>
    <property type="match status" value="1"/>
</dbReference>
<dbReference type="PANTHER" id="PTHR30523">
    <property type="entry name" value="PHOSPHOENOLPYRUVATE CARBOXYLASE"/>
    <property type="match status" value="1"/>
</dbReference>
<dbReference type="PANTHER" id="PTHR30523:SF6">
    <property type="entry name" value="PHOSPHOENOLPYRUVATE CARBOXYLASE"/>
    <property type="match status" value="1"/>
</dbReference>
<dbReference type="Pfam" id="PF00311">
    <property type="entry name" value="PEPcase"/>
    <property type="match status" value="1"/>
</dbReference>
<dbReference type="PRINTS" id="PR00150">
    <property type="entry name" value="PEPCARBXLASE"/>
</dbReference>
<dbReference type="SUPFAM" id="SSF51621">
    <property type="entry name" value="Phosphoenolpyruvate/pyruvate domain"/>
    <property type="match status" value="1"/>
</dbReference>
<dbReference type="PROSITE" id="PS00781">
    <property type="entry name" value="PEPCASE_1"/>
    <property type="match status" value="1"/>
</dbReference>
<dbReference type="PROSITE" id="PS00393">
    <property type="entry name" value="PEPCASE_2"/>
    <property type="match status" value="1"/>
</dbReference>
<sequence length="883" mass="99063">MNEQYSALRSNVSMLGKVLGETIKDALGEHILERVETIRKLSKSSRAGNDANRQELLTTLQNLSNDELLPVARAFSQFLNLANTAEQYHSISPKGEAASNPEVIARTLRKLKNQPELSEDTIKKAVESLSLELVLTAHPTEITRRTLIHKMVEVNACLKQLDNKDIADYEHNQLMRRLRQLIAQSWHTDEIRKLRPSPVDEAKWGFAVVENSLWQGVPNYLRELNEQLEENLGYKLPVEFVPVRFTSWMGGDRDGNPNVTADITRHVLLLSRWKATDLFLKDIQVLVSELSMVEATPELLALVGEEGAAEPYRYLMKNLRSRLMATQAWLEARLKGEELPKPEGLLTQNEELWEPLYACYQSLQACGMGIIANGDLLDTLRRVKCFGVPLVRIDIRQESTRHTEALGELTRYLGIGDYESWSEADKQAFLIRELNSKRPLLPRNWQPSAETREVLDTCQVIAEAPQGSIAAYVISMAKTPSDVLAVHLLLKEAGIGFAMPVAPLFETLDDLNNANDVMTQLLNIDWYRGLIQGKQMVMIGYSDSAKDAGVMAASWAQYQAQDALIKTCEKAGIELTLFHGRGGSIGRGGAPAHAALLSQPPGSLKGGLRVTEQGEMIRFKYGLPEITVSSLSLYTGAILEANLLPPPEPKESWRRIMDELSVISCDVYRGYVRENKDFVPYFRSATPEQELGKLPLGSRPAKRRPTGGVESLRAIPWIFAWTQNRLMLPAWLGAGTALQKVVEDGKQSELEAMCRDWPFFSTRLGMLEMVFAKADLWLAEYYDQRLVDKALWPLGKELRNLQEEDIKVVLAIANDSHLMADLPWIAESIQLRNIYTDPLNVLQAELLHRSRQAEKEGQEPDPRVEQALMVTIAGIAAGMRNTG</sequence>
<comment type="function">
    <text>Forms oxaloacetate, a four-carbon dicarboxylic acid source for the tricarboxylic acid cycle.</text>
</comment>
<comment type="catalytic activity">
    <reaction>
        <text>oxaloacetate + phosphate = phosphoenolpyruvate + hydrogencarbonate</text>
        <dbReference type="Rhea" id="RHEA:28370"/>
        <dbReference type="ChEBI" id="CHEBI:16452"/>
        <dbReference type="ChEBI" id="CHEBI:17544"/>
        <dbReference type="ChEBI" id="CHEBI:43474"/>
        <dbReference type="ChEBI" id="CHEBI:58702"/>
        <dbReference type="EC" id="4.1.1.31"/>
    </reaction>
</comment>
<comment type="cofactor">
    <cofactor evidence="1">
        <name>Mg(2+)</name>
        <dbReference type="ChEBI" id="CHEBI:18420"/>
    </cofactor>
</comment>
<comment type="activity regulation">
    <text>The enzyme has distinct binding sites for each of the allosteric effectors such as acetyl-CoA, fructose 1,6-bisphosphate, guanosine 3'-diphosphate 5'-diphosphate, long chain fatty acids, and L-aspartate.</text>
</comment>
<comment type="subunit">
    <text>Homotetramer.</text>
</comment>
<comment type="similarity">
    <text evidence="5">Belongs to the PEPCase type 1 family.</text>
</comment>
<protein>
    <recommendedName>
        <fullName>Phosphoenolpyruvate carboxylase</fullName>
        <shortName>PEPC</shortName>
        <shortName>PEPCase</shortName>
        <ecNumber>4.1.1.31</ecNumber>
    </recommendedName>
</protein>
<feature type="chain" id="PRO_0000166592" description="Phosphoenolpyruvate carboxylase">
    <location>
        <begin position="1"/>
        <end position="883"/>
    </location>
</feature>
<feature type="active site">
    <location>
        <position position="138"/>
    </location>
</feature>
<feature type="active site" evidence="1">
    <location>
        <position position="546"/>
    </location>
</feature>
<feature type="mutagenesis site" description="Loss of activity." evidence="2">
    <original>H</original>
    <variation>N</variation>
    <location>
        <position position="138"/>
    </location>
</feature>
<feature type="mutagenesis site" description="29% of wild-type activity." evidence="3">
    <original>H</original>
    <variation>N</variation>
    <location>
        <position position="579"/>
    </location>
</feature>
<feature type="mutagenesis site" description="5.4% of wild-type activity." evidence="3">
    <original>H</original>
    <variation>P</variation>
    <location>
        <position position="579"/>
    </location>
</feature>
<feature type="mutagenesis site" description="Loss of activity." evidence="4">
    <original>R</original>
    <variation>S</variation>
    <location>
        <position position="587"/>
    </location>
</feature>
<feature type="helix" evidence="6">
    <location>
        <begin position="6"/>
        <end position="26"/>
    </location>
</feature>
<feature type="turn" evidence="6">
    <location>
        <begin position="27"/>
        <end position="29"/>
    </location>
</feature>
<feature type="helix" evidence="6">
    <location>
        <begin position="30"/>
        <end position="46"/>
    </location>
</feature>
<feature type="helix" evidence="6">
    <location>
        <begin position="50"/>
        <end position="61"/>
    </location>
</feature>
<feature type="helix" evidence="6">
    <location>
        <begin position="65"/>
        <end position="91"/>
    </location>
</feature>
<feature type="turn" evidence="6">
    <location>
        <begin position="93"/>
        <end position="96"/>
    </location>
</feature>
<feature type="helix" evidence="6">
    <location>
        <begin position="102"/>
        <end position="112"/>
    </location>
</feature>
<feature type="helix" evidence="6">
    <location>
        <begin position="119"/>
        <end position="127"/>
    </location>
</feature>
<feature type="strand" evidence="6">
    <location>
        <begin position="131"/>
        <end position="135"/>
    </location>
</feature>
<feature type="strand" evidence="6">
    <location>
        <begin position="143"/>
        <end position="145"/>
    </location>
</feature>
<feature type="helix" evidence="6">
    <location>
        <begin position="148"/>
        <end position="161"/>
    </location>
</feature>
<feature type="helix" evidence="6">
    <location>
        <begin position="168"/>
        <end position="187"/>
    </location>
</feature>
<feature type="helix" evidence="6">
    <location>
        <begin position="198"/>
        <end position="211"/>
    </location>
</feature>
<feature type="helix" evidence="6">
    <location>
        <begin position="213"/>
        <end position="231"/>
    </location>
</feature>
<feature type="strand" evidence="6">
    <location>
        <begin position="243"/>
        <end position="247"/>
    </location>
</feature>
<feature type="turn" evidence="6">
    <location>
        <begin position="249"/>
        <end position="251"/>
    </location>
</feature>
<feature type="helix" evidence="6">
    <location>
        <begin position="261"/>
        <end position="289"/>
    </location>
</feature>
<feature type="helix" evidence="6">
    <location>
        <begin position="297"/>
        <end position="303"/>
    </location>
</feature>
<feature type="strand" evidence="6">
    <location>
        <begin position="307"/>
        <end position="310"/>
    </location>
</feature>
<feature type="helix" evidence="6">
    <location>
        <begin position="311"/>
        <end position="334"/>
    </location>
</feature>
<feature type="helix" evidence="6">
    <location>
        <begin position="349"/>
        <end position="365"/>
    </location>
</feature>
<feature type="helix" evidence="6">
    <location>
        <begin position="369"/>
        <end position="372"/>
    </location>
</feature>
<feature type="helix" evidence="6">
    <location>
        <begin position="375"/>
        <end position="385"/>
    </location>
</feature>
<feature type="turn" evidence="6">
    <location>
        <begin position="386"/>
        <end position="389"/>
    </location>
</feature>
<feature type="strand" evidence="6">
    <location>
        <begin position="390"/>
        <end position="398"/>
    </location>
</feature>
<feature type="helix" evidence="6">
    <location>
        <begin position="399"/>
        <end position="412"/>
    </location>
</feature>
<feature type="helix" evidence="6">
    <location>
        <begin position="418"/>
        <end position="420"/>
    </location>
</feature>
<feature type="helix" evidence="6">
    <location>
        <begin position="423"/>
        <end position="435"/>
    </location>
</feature>
<feature type="helix" evidence="6">
    <location>
        <begin position="449"/>
        <end position="463"/>
    </location>
</feature>
<feature type="strand" evidence="6">
    <location>
        <begin position="468"/>
        <end position="475"/>
    </location>
</feature>
<feature type="helix" evidence="6">
    <location>
        <begin position="480"/>
        <end position="491"/>
    </location>
</feature>
<feature type="turn" evidence="6">
    <location>
        <begin position="492"/>
        <end position="494"/>
    </location>
</feature>
<feature type="strand" evidence="6">
    <location>
        <begin position="501"/>
        <end position="505"/>
    </location>
</feature>
<feature type="helix" evidence="6">
    <location>
        <begin position="508"/>
        <end position="523"/>
    </location>
</feature>
<feature type="helix" evidence="6">
    <location>
        <begin position="525"/>
        <end position="530"/>
    </location>
</feature>
<feature type="turn" evidence="6">
    <location>
        <begin position="531"/>
        <end position="533"/>
    </location>
</feature>
<feature type="strand" evidence="6">
    <location>
        <begin position="534"/>
        <end position="539"/>
    </location>
</feature>
<feature type="helix" evidence="6">
    <location>
        <begin position="541"/>
        <end position="548"/>
    </location>
</feature>
<feature type="helix" evidence="6">
    <location>
        <begin position="550"/>
        <end position="571"/>
    </location>
</feature>
<feature type="strand" evidence="6">
    <location>
        <begin position="574"/>
        <end position="579"/>
    </location>
</feature>
<feature type="helix" evidence="6">
    <location>
        <begin position="584"/>
        <end position="586"/>
    </location>
</feature>
<feature type="helix" evidence="6">
    <location>
        <begin position="589"/>
        <end position="597"/>
    </location>
</feature>
<feature type="turn" evidence="6">
    <location>
        <begin position="601"/>
        <end position="606"/>
    </location>
</feature>
<feature type="strand" evidence="6">
    <location>
        <begin position="608"/>
        <end position="612"/>
    </location>
</feature>
<feature type="helix" evidence="6">
    <location>
        <begin position="614"/>
        <end position="616"/>
    </location>
</feature>
<feature type="helix" evidence="6">
    <location>
        <begin position="617"/>
        <end position="621"/>
    </location>
</feature>
<feature type="helix" evidence="6">
    <location>
        <begin position="624"/>
        <end position="643"/>
    </location>
</feature>
<feature type="helix" evidence="6">
    <location>
        <begin position="651"/>
        <end position="672"/>
    </location>
</feature>
<feature type="helix" evidence="6">
    <location>
        <begin position="678"/>
        <end position="685"/>
    </location>
</feature>
<feature type="helix" evidence="6">
    <location>
        <begin position="688"/>
        <end position="693"/>
    </location>
</feature>
<feature type="strand" evidence="7">
    <location>
        <begin position="697"/>
        <end position="699"/>
    </location>
</feature>
<feature type="helix" evidence="6">
    <location>
        <begin position="709"/>
        <end position="711"/>
    </location>
</feature>
<feature type="helix" evidence="6">
    <location>
        <begin position="714"/>
        <end position="723"/>
    </location>
</feature>
<feature type="helix" evidence="6">
    <location>
        <begin position="728"/>
        <end position="730"/>
    </location>
</feature>
<feature type="turn" evidence="6">
    <location>
        <begin position="731"/>
        <end position="733"/>
    </location>
</feature>
<feature type="helix" evidence="6">
    <location>
        <begin position="734"/>
        <end position="742"/>
    </location>
</feature>
<feature type="turn" evidence="6">
    <location>
        <begin position="743"/>
        <end position="745"/>
    </location>
</feature>
<feature type="helix" evidence="6">
    <location>
        <begin position="747"/>
        <end position="756"/>
    </location>
</feature>
<feature type="helix" evidence="6">
    <location>
        <begin position="758"/>
        <end position="773"/>
    </location>
</feature>
<feature type="helix" evidence="6">
    <location>
        <begin position="776"/>
        <end position="786"/>
    </location>
</feature>
<feature type="turn" evidence="6">
    <location>
        <begin position="789"/>
        <end position="791"/>
    </location>
</feature>
<feature type="helix" evidence="6">
    <location>
        <begin position="792"/>
        <end position="812"/>
    </location>
</feature>
<feature type="turn" evidence="6">
    <location>
        <begin position="818"/>
        <end position="821"/>
    </location>
</feature>
<feature type="helix" evidence="6">
    <location>
        <begin position="823"/>
        <end position="856"/>
    </location>
</feature>
<feature type="helix" evidence="6">
    <location>
        <begin position="862"/>
        <end position="879"/>
    </location>
</feature>
<keyword id="KW-0002">3D-structure</keyword>
<keyword id="KW-0021">Allosteric enzyme</keyword>
<keyword id="KW-0120">Carbon dioxide fixation</keyword>
<keyword id="KW-0456">Lyase</keyword>
<keyword id="KW-0460">Magnesium</keyword>
<keyword id="KW-1185">Reference proteome</keyword>
<reference key="1">
    <citation type="journal article" date="1984" name="J. Biochem.">
        <title>The primary structure of phosphoenolpyruvate carboxylase of Escherichia coli. Nucleotide sequence of the ppc gene and deduced amino acid sequence.</title>
        <authorList>
            <person name="Fujita N."/>
            <person name="Miwa T."/>
            <person name="Ishijima S."/>
            <person name="Izui K."/>
            <person name="Katsuki H."/>
        </authorList>
    </citation>
    <scope>NUCLEOTIDE SEQUENCE [GENOMIC DNA]</scope>
</reference>
<reference key="2">
    <citation type="journal article" date="1993" name="Nucleic Acids Res.">
        <title>Analysis of the Escherichia coli genome. IV. DNA sequence of the region from 89.2 to 92.8 minutes.</title>
        <authorList>
            <person name="Blattner F.R."/>
            <person name="Burland V.D."/>
            <person name="Plunkett G. III"/>
            <person name="Sofia H.J."/>
            <person name="Daniels D.L."/>
        </authorList>
    </citation>
    <scope>NUCLEOTIDE SEQUENCE [LARGE SCALE GENOMIC DNA]</scope>
    <source>
        <strain>K12 / MG1655 / ATCC 47076</strain>
    </source>
</reference>
<reference key="3">
    <citation type="journal article" date="1997" name="Science">
        <title>The complete genome sequence of Escherichia coli K-12.</title>
        <authorList>
            <person name="Blattner F.R."/>
            <person name="Plunkett G. III"/>
            <person name="Bloch C.A."/>
            <person name="Perna N.T."/>
            <person name="Burland V."/>
            <person name="Riley M."/>
            <person name="Collado-Vides J."/>
            <person name="Glasner J.D."/>
            <person name="Rode C.K."/>
            <person name="Mayhew G.F."/>
            <person name="Gregor J."/>
            <person name="Davis N.W."/>
            <person name="Kirkpatrick H.A."/>
            <person name="Goeden M.A."/>
            <person name="Rose D.J."/>
            <person name="Mau B."/>
            <person name="Shao Y."/>
        </authorList>
    </citation>
    <scope>NUCLEOTIDE SEQUENCE [LARGE SCALE GENOMIC DNA]</scope>
    <source>
        <strain>K12 / MG1655 / ATCC 47076</strain>
    </source>
</reference>
<reference key="4">
    <citation type="journal article" date="2006" name="Mol. Syst. Biol.">
        <title>Highly accurate genome sequences of Escherichia coli K-12 strains MG1655 and W3110.</title>
        <authorList>
            <person name="Hayashi K."/>
            <person name="Morooka N."/>
            <person name="Yamamoto Y."/>
            <person name="Fujita K."/>
            <person name="Isono K."/>
            <person name="Choi S."/>
            <person name="Ohtsubo E."/>
            <person name="Baba T."/>
            <person name="Wanner B.L."/>
            <person name="Mori H."/>
            <person name="Horiuchi T."/>
        </authorList>
    </citation>
    <scope>NUCLEOTIDE SEQUENCE [LARGE SCALE GENOMIC DNA]</scope>
    <source>
        <strain>K12 / W3110 / ATCC 27325 / DSM 5911</strain>
    </source>
</reference>
<reference key="5">
    <citation type="journal article" date="1992" name="J. Bacteriol.">
        <title>Structural and biochemical characterization of the Escherichia coli argE gene product.</title>
        <authorList>
            <person name="Meinnel T."/>
            <person name="Schmitt E."/>
            <person name="Mechulam Y."/>
            <person name="Blanquet S."/>
        </authorList>
    </citation>
    <scope>NUCLEOTIDE SEQUENCE [GENOMIC DNA] OF 1-37</scope>
    <source>
        <strain>K12</strain>
    </source>
</reference>
<reference key="6">
    <citation type="journal article" date="1985" name="Nucleic Acids Res.">
        <title>Promoter analysis of the phosphoenolpyruvate carboxylase gene of Escherichia coli.</title>
        <authorList>
            <person name="Izui K."/>
            <person name="Miwa T."/>
            <person name="Kajitani M."/>
            <person name="Fujita N."/>
            <person name="Sabe H."/>
            <person name="Ishihama I."/>
            <person name="Katsuki H."/>
        </authorList>
    </citation>
    <scope>NUCLEOTIDE SEQUENCE [GENOMIC DNA] OF 1-41</scope>
</reference>
<reference key="7">
    <citation type="journal article" date="1991" name="J. Biochem.">
        <title>Site-directed mutagenesis of phosphoenolpyruvate carboxylase from E. coli: the role of His579 in the catalytic and regulatory functions.</title>
        <authorList>
            <person name="Terada K."/>
            <person name="Murata T."/>
            <person name="Izui K."/>
        </authorList>
    </citation>
    <scope>MUTAGENESIS OF HIS-579</scope>
</reference>
<reference key="8">
    <citation type="journal article" date="1991" name="Eur. J. Biochem.">
        <title>Site-directed mutagenesis of the conserved histidine residue of phosphoenolpyruvate carboxylase. His138 is essential for the second partial reaction.</title>
        <authorList>
            <person name="Terada K."/>
            <person name="Izui K."/>
        </authorList>
    </citation>
    <scope>MUTAGENESIS OF HIS-138</scope>
</reference>
<reference key="9">
    <citation type="journal article" date="1995" name="J. Biochem.">
        <title>Catalytic role of an arginine residue in the highly conserved and unique sequence of phosphoenolpyruvate carboxylase.</title>
        <authorList>
            <person name="Yano M."/>
            <person name="Terada K."/>
            <person name="Umiji K."/>
            <person name="Izui K."/>
        </authorList>
    </citation>
    <scope>MUTAGENESIS OF ARG-587</scope>
</reference>
<reference key="10">
    <citation type="journal article" date="1989" name="J. Mol. Biol.">
        <title>First crystallization of a phosphoenolpyruvate carboxylase from Escherichia coli.</title>
        <authorList>
            <person name="Inoue M."/>
            <person name="Hayashi M."/>
            <person name="Sugimoto M."/>
            <person name="Harada S."/>
            <person name="Kai Y."/>
            <person name="Kasai N."/>
            <person name="Terada K."/>
            <person name="Izui K."/>
        </authorList>
    </citation>
    <scope>CRYSTALLIZATION</scope>
</reference>
<reference key="11">
    <citation type="journal article" date="1997" name="Electrophoresis">
        <title>Escherichia coli proteome analysis using the gene-protein database.</title>
        <authorList>
            <person name="VanBogelen R.A."/>
            <person name="Abshire K.Z."/>
            <person name="Moldover B."/>
            <person name="Olson E.R."/>
            <person name="Neidhardt F.C."/>
        </authorList>
    </citation>
    <scope>IDENTIFICATION BY 2D-GEL</scope>
</reference>
<reference key="12">
    <citation type="journal article" date="1999" name="Proc. Natl. Acad. Sci. U.S.A.">
        <title>Three-dimensional structure of phosphoenolpyruvate carboxylase: a proposed mechanism for allosteric inhibition.</title>
        <authorList>
            <person name="Kai Y."/>
            <person name="Matsumura H."/>
            <person name="Inoue T."/>
            <person name="Terada K."/>
            <person name="Nagara Y."/>
            <person name="Yoshinaga T."/>
            <person name="Kihara A."/>
            <person name="Tsumura K."/>
            <person name="Izui K."/>
        </authorList>
    </citation>
    <scope>X-RAY CRYSTALLOGRAPHY (2.8 ANGSTROMS)</scope>
</reference>
<gene>
    <name type="primary">ppc</name>
    <name type="synonym">glu</name>
    <name type="ordered locus">b3956</name>
    <name type="ordered locus">JW3928</name>
</gene>
<proteinExistence type="evidence at protein level"/>
<evidence type="ECO:0000250" key="1"/>
<evidence type="ECO:0000269" key="2">
    <source>
    </source>
</evidence>
<evidence type="ECO:0000269" key="3">
    <source>
    </source>
</evidence>
<evidence type="ECO:0000269" key="4">
    <source>
    </source>
</evidence>
<evidence type="ECO:0000305" key="5"/>
<evidence type="ECO:0007829" key="6">
    <source>
        <dbReference type="PDB" id="1JQN"/>
    </source>
</evidence>
<evidence type="ECO:0007829" key="7">
    <source>
        <dbReference type="PDB" id="1QB4"/>
    </source>
</evidence>